<keyword id="KW-1003">Cell membrane</keyword>
<keyword id="KW-0472">Membrane</keyword>
<keyword id="KW-0653">Protein transport</keyword>
<keyword id="KW-0811">Translocation</keyword>
<keyword id="KW-0812">Transmembrane</keyword>
<keyword id="KW-1133">Transmembrane helix</keyword>
<keyword id="KW-0813">Transport</keyword>
<proteinExistence type="inferred from homology"/>
<reference key="1">
    <citation type="journal article" date="2002" name="Lancet">
        <title>Genome and virulence determinants of high virulence community-acquired MRSA.</title>
        <authorList>
            <person name="Baba T."/>
            <person name="Takeuchi F."/>
            <person name="Kuroda M."/>
            <person name="Yuzawa H."/>
            <person name="Aoki K."/>
            <person name="Oguchi A."/>
            <person name="Nagai Y."/>
            <person name="Iwama N."/>
            <person name="Asano K."/>
            <person name="Naimi T."/>
            <person name="Kuroda H."/>
            <person name="Cui L."/>
            <person name="Yamamoto K."/>
            <person name="Hiramatsu K."/>
        </authorList>
    </citation>
    <scope>NUCLEOTIDE SEQUENCE [LARGE SCALE GENOMIC DNA]</scope>
    <source>
        <strain>MW2</strain>
    </source>
</reference>
<gene>
    <name evidence="1" type="primary">secE</name>
    <name type="ordered locus">MW0490</name>
</gene>
<name>SECE_STAAW</name>
<sequence length="60" mass="6932">MAKKESFFKGVKSEMEKTSWPTKEELFKYTVIVVSTVIFFLVFFYALDLGITALKNLLFG</sequence>
<evidence type="ECO:0000255" key="1">
    <source>
        <dbReference type="HAMAP-Rule" id="MF_00422"/>
    </source>
</evidence>
<protein>
    <recommendedName>
        <fullName evidence="1">Protein translocase subunit SecE</fullName>
    </recommendedName>
</protein>
<organism>
    <name type="scientific">Staphylococcus aureus (strain MW2)</name>
    <dbReference type="NCBI Taxonomy" id="196620"/>
    <lineage>
        <taxon>Bacteria</taxon>
        <taxon>Bacillati</taxon>
        <taxon>Bacillota</taxon>
        <taxon>Bacilli</taxon>
        <taxon>Bacillales</taxon>
        <taxon>Staphylococcaceae</taxon>
        <taxon>Staphylococcus</taxon>
    </lineage>
</organism>
<dbReference type="EMBL" id="BA000033">
    <property type="protein sequence ID" value="BAB94355.1"/>
    <property type="molecule type" value="Genomic_DNA"/>
</dbReference>
<dbReference type="RefSeq" id="WP_001074473.1">
    <property type="nucleotide sequence ID" value="NC_003923.1"/>
</dbReference>
<dbReference type="SMR" id="P0A0I3"/>
<dbReference type="GeneID" id="98344869"/>
<dbReference type="KEGG" id="sam:MW0490"/>
<dbReference type="HOGENOM" id="CLU_113663_8_2_9"/>
<dbReference type="GO" id="GO:0005886">
    <property type="term" value="C:plasma membrane"/>
    <property type="evidence" value="ECO:0007669"/>
    <property type="project" value="UniProtKB-SubCell"/>
</dbReference>
<dbReference type="GO" id="GO:0008320">
    <property type="term" value="F:protein transmembrane transporter activity"/>
    <property type="evidence" value="ECO:0007669"/>
    <property type="project" value="UniProtKB-UniRule"/>
</dbReference>
<dbReference type="GO" id="GO:0065002">
    <property type="term" value="P:intracellular protein transmembrane transport"/>
    <property type="evidence" value="ECO:0007669"/>
    <property type="project" value="UniProtKB-UniRule"/>
</dbReference>
<dbReference type="GO" id="GO:0009306">
    <property type="term" value="P:protein secretion"/>
    <property type="evidence" value="ECO:0007669"/>
    <property type="project" value="UniProtKB-UniRule"/>
</dbReference>
<dbReference type="GO" id="GO:0006605">
    <property type="term" value="P:protein targeting"/>
    <property type="evidence" value="ECO:0007669"/>
    <property type="project" value="UniProtKB-UniRule"/>
</dbReference>
<dbReference type="GO" id="GO:0043952">
    <property type="term" value="P:protein transport by the Sec complex"/>
    <property type="evidence" value="ECO:0007669"/>
    <property type="project" value="UniProtKB-UniRule"/>
</dbReference>
<dbReference type="Gene3D" id="1.20.5.1030">
    <property type="entry name" value="Preprotein translocase secy subunit"/>
    <property type="match status" value="1"/>
</dbReference>
<dbReference type="HAMAP" id="MF_00422">
    <property type="entry name" value="SecE"/>
    <property type="match status" value="1"/>
</dbReference>
<dbReference type="InterPro" id="IPR005807">
    <property type="entry name" value="SecE_bac"/>
</dbReference>
<dbReference type="InterPro" id="IPR038379">
    <property type="entry name" value="SecE_sf"/>
</dbReference>
<dbReference type="InterPro" id="IPR001901">
    <property type="entry name" value="Translocase_SecE/Sec61-g"/>
</dbReference>
<dbReference type="NCBIfam" id="TIGR00964">
    <property type="entry name" value="secE_bact"/>
    <property type="match status" value="1"/>
</dbReference>
<dbReference type="PANTHER" id="PTHR33910">
    <property type="entry name" value="PROTEIN TRANSLOCASE SUBUNIT SECE"/>
    <property type="match status" value="1"/>
</dbReference>
<dbReference type="PANTHER" id="PTHR33910:SF1">
    <property type="entry name" value="PROTEIN TRANSLOCASE SUBUNIT SECE"/>
    <property type="match status" value="1"/>
</dbReference>
<dbReference type="Pfam" id="PF00584">
    <property type="entry name" value="SecE"/>
    <property type="match status" value="1"/>
</dbReference>
<dbReference type="PROSITE" id="PS01067">
    <property type="entry name" value="SECE_SEC61G"/>
    <property type="match status" value="1"/>
</dbReference>
<feature type="chain" id="PRO_0000104178" description="Protein translocase subunit SecE">
    <location>
        <begin position="1"/>
        <end position="60"/>
    </location>
</feature>
<feature type="transmembrane region" description="Helical" evidence="1">
    <location>
        <begin position="31"/>
        <end position="51"/>
    </location>
</feature>
<comment type="function">
    <text evidence="1">Essential subunit of the Sec protein translocation channel SecYEG. Clamps together the 2 halves of SecY. May contact the channel plug during translocation.</text>
</comment>
<comment type="subunit">
    <text evidence="1">Component of the Sec protein translocase complex. Heterotrimer consisting of SecY, SecE and SecG subunits. The heterotrimers can form oligomers, although 1 heterotrimer is thought to be able to translocate proteins. Interacts with the ribosome. Interacts with SecDF, and other proteins may be involved. Interacts with SecA.</text>
</comment>
<comment type="subcellular location">
    <subcellularLocation>
        <location evidence="1">Cell membrane</location>
        <topology evidence="1">Single-pass membrane protein</topology>
    </subcellularLocation>
</comment>
<comment type="similarity">
    <text evidence="1">Belongs to the SecE/SEC61-gamma family.</text>
</comment>
<accession>P0A0I3</accession>
<accession>O06442</accession>